<dbReference type="PIR" id="A59006">
    <property type="entry name" value="A59006"/>
</dbReference>
<dbReference type="SMR" id="P81240"/>
<dbReference type="GO" id="GO:0005576">
    <property type="term" value="C:extracellular region"/>
    <property type="evidence" value="ECO:0007669"/>
    <property type="project" value="UniProtKB-SubCell"/>
</dbReference>
<dbReference type="GO" id="GO:0019871">
    <property type="term" value="F:sodium channel inhibitor activity"/>
    <property type="evidence" value="ECO:0007669"/>
    <property type="project" value="InterPro"/>
</dbReference>
<dbReference type="GO" id="GO:0090729">
    <property type="term" value="F:toxin activity"/>
    <property type="evidence" value="ECO:0007669"/>
    <property type="project" value="UniProtKB-KW"/>
</dbReference>
<dbReference type="GO" id="GO:0006952">
    <property type="term" value="P:defense response"/>
    <property type="evidence" value="ECO:0007669"/>
    <property type="project" value="InterPro"/>
</dbReference>
<dbReference type="CDD" id="cd23106">
    <property type="entry name" value="neurotoxins_LC_scorpion"/>
    <property type="match status" value="1"/>
</dbReference>
<dbReference type="Gene3D" id="3.30.30.10">
    <property type="entry name" value="Knottin, scorpion toxin-like"/>
    <property type="match status" value="1"/>
</dbReference>
<dbReference type="InterPro" id="IPR044062">
    <property type="entry name" value="LCN-type_CS_alpha_beta_dom"/>
</dbReference>
<dbReference type="InterPro" id="IPR003614">
    <property type="entry name" value="Scorpion_toxin-like"/>
</dbReference>
<dbReference type="InterPro" id="IPR036574">
    <property type="entry name" value="Scorpion_toxin-like_sf"/>
</dbReference>
<dbReference type="InterPro" id="IPR018218">
    <property type="entry name" value="Scorpion_toxinL"/>
</dbReference>
<dbReference type="InterPro" id="IPR002061">
    <property type="entry name" value="Scorpion_toxinL/defensin"/>
</dbReference>
<dbReference type="Pfam" id="PF00537">
    <property type="entry name" value="Toxin_3"/>
    <property type="match status" value="1"/>
</dbReference>
<dbReference type="PRINTS" id="PR00285">
    <property type="entry name" value="SCORPNTOXIN"/>
</dbReference>
<dbReference type="SMART" id="SM00505">
    <property type="entry name" value="Knot1"/>
    <property type="match status" value="1"/>
</dbReference>
<dbReference type="SUPFAM" id="SSF57095">
    <property type="entry name" value="Scorpion toxin-like"/>
    <property type="match status" value="1"/>
</dbReference>
<dbReference type="PROSITE" id="PS51863">
    <property type="entry name" value="LCN_CSAB"/>
    <property type="match status" value="1"/>
</dbReference>
<feature type="chain" id="PRO_0000066710" description="Insect toxin LqhIT5">
    <location>
        <begin position="1"/>
        <end position="61"/>
    </location>
</feature>
<feature type="domain" description="LCN-type CS-alpha/beta" evidence="2">
    <location>
        <begin position="1"/>
        <end position="61"/>
    </location>
</feature>
<feature type="disulfide bond" evidence="2">
    <location>
        <begin position="10"/>
        <end position="60"/>
    </location>
</feature>
<feature type="disulfide bond" evidence="2">
    <location>
        <begin position="14"/>
        <end position="35"/>
    </location>
</feature>
<feature type="disulfide bond" evidence="2">
    <location>
        <begin position="21"/>
        <end position="42"/>
    </location>
</feature>
<feature type="disulfide bond" evidence="2">
    <location>
        <begin position="25"/>
        <end position="44"/>
    </location>
</feature>
<reference key="1">
    <citation type="journal article" date="1998" name="Eur. J. Biochem.">
        <title>A depressant insect-selective toxin analog from the venom of the scorpion Leiurus quinquestriatus hebraeus -- purification and structure/function characterization.</title>
        <authorList>
            <person name="Moskowitz H."/>
            <person name="Herrmann R."/>
            <person name="Jones A.D."/>
            <person name="Hammock B.D."/>
        </authorList>
    </citation>
    <scope>PROTEIN SEQUENCE</scope>
    <source>
        <tissue>Venom</tissue>
    </source>
</reference>
<reference key="2">
    <citation type="journal article" date="2006" name="Toxicon">
        <title>Moving pieces in a taxonomic puzzle: venom 2D-LC/MS and data clustering analyses to infer phylogenetic relationships in some scorpions from the Buthidae family (Scorpiones).</title>
        <authorList>
            <person name="Nascimento D.G."/>
            <person name="Rates B."/>
            <person name="Santos D.M."/>
            <person name="Verano-Braga T."/>
            <person name="Barbosa-Silva A."/>
            <person name="Dutra A.A.A."/>
            <person name="Biondi I."/>
            <person name="Martin-Eauclaire M.-F."/>
            <person name="De Lima M.E."/>
            <person name="Pimenta A.M.C."/>
        </authorList>
    </citation>
    <scope>IDENTIFICATION BY MASS SPECTROMETRY</scope>
</reference>
<proteinExistence type="evidence at protein level"/>
<accession>P81240</accession>
<sequence length="61" mass="6677">DGYIRGGDGCKVSCVIDHVFCDNECKAAGGSYGYCWGWGLACWCEGLPADREWKYETNTCG</sequence>
<protein>
    <recommendedName>
        <fullName>Insect toxin LqhIT5</fullName>
        <shortName>Lqh IT5</shortName>
        <shortName>Toxin 5</shortName>
    </recommendedName>
</protein>
<organism>
    <name type="scientific">Leiurus hebraeus</name>
    <name type="common">Hebrew deathstalker scorpion</name>
    <name type="synonym">Leiurus quinquestriatus hebraeus</name>
    <dbReference type="NCBI Taxonomy" id="2899558"/>
    <lineage>
        <taxon>Eukaryota</taxon>
        <taxon>Metazoa</taxon>
        <taxon>Ecdysozoa</taxon>
        <taxon>Arthropoda</taxon>
        <taxon>Chelicerata</taxon>
        <taxon>Arachnida</taxon>
        <taxon>Scorpiones</taxon>
        <taxon>Buthida</taxon>
        <taxon>Buthoidea</taxon>
        <taxon>Buthidae</taxon>
        <taxon>Leiurus</taxon>
    </lineage>
</organism>
<comment type="function">
    <text evidence="1">Excitatory insect beta-toxins induce a spastic paralysis. They bind voltage-independently at site-4 of sodium channels (Nav) and shift the voltage of activation toward more negative potentials thereby affecting sodium channel activation and promoting spontaneous and repetitive firing (By similarity). This toxin is active only on insects. It operates by inducing a fast contraction paralysis without depressant activity. It is more similar to the excitatory toxins in its mode of action and the depressant toxins in its primary structure.</text>
</comment>
<comment type="subcellular location">
    <subcellularLocation>
        <location>Secreted</location>
    </subcellularLocation>
</comment>
<comment type="tissue specificity">
    <text>Expressed by the venom gland.</text>
</comment>
<comment type="domain">
    <text evidence="3">Has the structural arrangement of an alpha-helix connected to antiparallel beta-sheets by disulfide bonds (CS-alpha/beta).</text>
</comment>
<comment type="similarity">
    <text evidence="3">Belongs to the long (4 C-C) scorpion toxin superfamily. Sodium channel inhibitor family. Beta subfamily.</text>
</comment>
<evidence type="ECO:0000250" key="1"/>
<evidence type="ECO:0000255" key="2">
    <source>
        <dbReference type="PROSITE-ProRule" id="PRU01210"/>
    </source>
</evidence>
<evidence type="ECO:0000305" key="3"/>
<keyword id="KW-0903">Direct protein sequencing</keyword>
<keyword id="KW-1015">Disulfide bond</keyword>
<keyword id="KW-0872">Ion channel impairing toxin</keyword>
<keyword id="KW-0528">Neurotoxin</keyword>
<keyword id="KW-0964">Secreted</keyword>
<keyword id="KW-0800">Toxin</keyword>
<keyword id="KW-0738">Voltage-gated sodium channel impairing toxin</keyword>
<name>SIX5_LEIHE</name>